<sequence>MKYRDLRDFIHGLEQRGELRRVTQPVSPVLEMTELCDRVLRAGGPALLFDAPAGHRFPVLGNLFGTPRRVALGMGVDADDEAALASLRDIGRLLSALKEPDPPKRLKDAGKLLSLAKAVWDMGPKTVSAPPCQEIVWEGDDVDLHKLPIQTCWPGDAGPLLTWGLTVTRGPNKTRQNLGIYRQQLIGRNKLIMRWLAHRGGALDFREFALKHPGQPYPVAVVLGADPATMLGAVTPVPDSLSEYQFAGLLRGARTELAKCVTPGVDALQVPARAEIVLEGFIHPQQGAPAPAPEGAPPRPAAGAAAGYEHALEGPYGDHTGYYNEQEWFPVFTVERITMRRDAIYHSTYTGKPPDEPAVLGVALNEVFVPLLQKQFAEITDFYLPPEGCSYRMAIVQMKKSYAGHAKRVMFGVWSFLRQFMYTKFIVVVDEDVNVRDWKEVIWAITTRVDPARDTVLVENTPIDYLDFASPVAGLGSKMGLDATNKWPGETQREWGRPIEMDAAVKARVDRLWTEIGLS</sequence>
<gene>
    <name evidence="1" type="primary">ubiD</name>
    <name type="ordered locus">BMA2151</name>
</gene>
<comment type="function">
    <text evidence="1">Catalyzes the decarboxylation of 3-octaprenyl-4-hydroxy benzoate to 2-octaprenylphenol, an intermediate step in ubiquinone biosynthesis.</text>
</comment>
<comment type="catalytic activity">
    <reaction evidence="1">
        <text>a 4-hydroxy-3-(all-trans-polyprenyl)benzoate + H(+) = a 2-(all-trans-polyprenyl)phenol + CO2</text>
        <dbReference type="Rhea" id="RHEA:41680"/>
        <dbReference type="Rhea" id="RHEA-COMP:9514"/>
        <dbReference type="Rhea" id="RHEA-COMP:9516"/>
        <dbReference type="ChEBI" id="CHEBI:1269"/>
        <dbReference type="ChEBI" id="CHEBI:15378"/>
        <dbReference type="ChEBI" id="CHEBI:16526"/>
        <dbReference type="ChEBI" id="CHEBI:78396"/>
        <dbReference type="EC" id="4.1.1.98"/>
    </reaction>
</comment>
<comment type="cofactor">
    <cofactor evidence="1">
        <name>prenylated FMN</name>
        <dbReference type="ChEBI" id="CHEBI:87746"/>
    </cofactor>
    <text evidence="1">Binds 1 prenylated FMN per subunit.</text>
</comment>
<comment type="cofactor">
    <cofactor evidence="1">
        <name>Mn(2+)</name>
        <dbReference type="ChEBI" id="CHEBI:29035"/>
    </cofactor>
</comment>
<comment type="pathway">
    <text evidence="1">Cofactor biosynthesis; ubiquinone biosynthesis.</text>
</comment>
<comment type="subunit">
    <text evidence="1">Homohexamer.</text>
</comment>
<comment type="subcellular location">
    <subcellularLocation>
        <location evidence="1">Cell membrane</location>
        <topology evidence="1">Peripheral membrane protein</topology>
    </subcellularLocation>
</comment>
<comment type="similarity">
    <text evidence="1">Belongs to the UbiD family.</text>
</comment>
<feature type="chain" id="PRO_0000267653" description="3-octaprenyl-4-hydroxybenzoate carboxy-lyase">
    <location>
        <begin position="1"/>
        <end position="519"/>
    </location>
</feature>
<feature type="active site" description="Proton donor" evidence="1">
    <location>
        <position position="318"/>
    </location>
</feature>
<feature type="binding site" evidence="1">
    <location>
        <position position="177"/>
    </location>
    <ligand>
        <name>Mn(2+)</name>
        <dbReference type="ChEBI" id="CHEBI:29035"/>
    </ligand>
</feature>
<feature type="binding site" evidence="1">
    <location>
        <begin position="180"/>
        <end position="182"/>
    </location>
    <ligand>
        <name>prenylated FMN</name>
        <dbReference type="ChEBI" id="CHEBI:87746"/>
    </ligand>
</feature>
<feature type="binding site" evidence="1">
    <location>
        <begin position="194"/>
        <end position="196"/>
    </location>
    <ligand>
        <name>prenylated FMN</name>
        <dbReference type="ChEBI" id="CHEBI:87746"/>
    </ligand>
</feature>
<feature type="binding site" evidence="1">
    <location>
        <begin position="199"/>
        <end position="200"/>
    </location>
    <ligand>
        <name>prenylated FMN</name>
        <dbReference type="ChEBI" id="CHEBI:87746"/>
    </ligand>
</feature>
<feature type="binding site" evidence="1">
    <location>
        <position position="243"/>
    </location>
    <ligand>
        <name>Mn(2+)</name>
        <dbReference type="ChEBI" id="CHEBI:29035"/>
    </ligand>
</feature>
<accession>Q62HU9</accession>
<dbReference type="EC" id="4.1.1.98" evidence="1"/>
<dbReference type="EMBL" id="CP000010">
    <property type="protein sequence ID" value="AAU49942.1"/>
    <property type="molecule type" value="Genomic_DNA"/>
</dbReference>
<dbReference type="RefSeq" id="WP_004266880.1">
    <property type="nucleotide sequence ID" value="NC_006348.1"/>
</dbReference>
<dbReference type="RefSeq" id="YP_103721.1">
    <property type="nucleotide sequence ID" value="NC_006348.1"/>
</dbReference>
<dbReference type="SMR" id="Q62HU9"/>
<dbReference type="KEGG" id="bma:BMA2151"/>
<dbReference type="PATRIC" id="fig|243160.12.peg.2221"/>
<dbReference type="eggNOG" id="COG0043">
    <property type="taxonomic scope" value="Bacteria"/>
</dbReference>
<dbReference type="HOGENOM" id="CLU_023348_4_1_4"/>
<dbReference type="UniPathway" id="UPA00232"/>
<dbReference type="Proteomes" id="UP000006693">
    <property type="component" value="Chromosome 1"/>
</dbReference>
<dbReference type="GO" id="GO:0005829">
    <property type="term" value="C:cytosol"/>
    <property type="evidence" value="ECO:0007669"/>
    <property type="project" value="TreeGrafter"/>
</dbReference>
<dbReference type="GO" id="GO:0005886">
    <property type="term" value="C:plasma membrane"/>
    <property type="evidence" value="ECO:0007669"/>
    <property type="project" value="UniProtKB-SubCell"/>
</dbReference>
<dbReference type="GO" id="GO:0008694">
    <property type="term" value="F:3-octaprenyl-4-hydroxybenzoate carboxy-lyase activity"/>
    <property type="evidence" value="ECO:0007669"/>
    <property type="project" value="UniProtKB-UniRule"/>
</dbReference>
<dbReference type="GO" id="GO:0046872">
    <property type="term" value="F:metal ion binding"/>
    <property type="evidence" value="ECO:0007669"/>
    <property type="project" value="UniProtKB-KW"/>
</dbReference>
<dbReference type="GO" id="GO:0006744">
    <property type="term" value="P:ubiquinone biosynthetic process"/>
    <property type="evidence" value="ECO:0007669"/>
    <property type="project" value="UniProtKB-UniRule"/>
</dbReference>
<dbReference type="FunFam" id="1.20.5.570:FF:000001">
    <property type="entry name" value="3-octaprenyl-4-hydroxybenzoate carboxy-lyase"/>
    <property type="match status" value="1"/>
</dbReference>
<dbReference type="FunFam" id="3.40.1670.10:FF:000001">
    <property type="entry name" value="3-octaprenyl-4-hydroxybenzoate carboxy-lyase"/>
    <property type="match status" value="1"/>
</dbReference>
<dbReference type="Gene3D" id="1.20.5.570">
    <property type="entry name" value="Single helix bin"/>
    <property type="match status" value="1"/>
</dbReference>
<dbReference type="Gene3D" id="3.40.1670.10">
    <property type="entry name" value="UbiD C-terminal domain-like"/>
    <property type="match status" value="1"/>
</dbReference>
<dbReference type="HAMAP" id="MF_01636">
    <property type="entry name" value="UbiD"/>
    <property type="match status" value="1"/>
</dbReference>
<dbReference type="InterPro" id="IPR002830">
    <property type="entry name" value="UbiD"/>
</dbReference>
<dbReference type="InterPro" id="IPR049381">
    <property type="entry name" value="UbiD-like_C"/>
</dbReference>
<dbReference type="InterPro" id="IPR049383">
    <property type="entry name" value="UbiD-like_N"/>
</dbReference>
<dbReference type="InterPro" id="IPR023677">
    <property type="entry name" value="UbiD_bacteria"/>
</dbReference>
<dbReference type="InterPro" id="IPR048304">
    <property type="entry name" value="UbiD_Rift_dom"/>
</dbReference>
<dbReference type="NCBIfam" id="TIGR00148">
    <property type="entry name" value="UbiD family decarboxylase"/>
    <property type="match status" value="2"/>
</dbReference>
<dbReference type="PANTHER" id="PTHR30108">
    <property type="entry name" value="3-OCTAPRENYL-4-HYDROXYBENZOATE CARBOXY-LYASE-RELATED"/>
    <property type="match status" value="1"/>
</dbReference>
<dbReference type="PANTHER" id="PTHR30108:SF17">
    <property type="entry name" value="FERULIC ACID DECARBOXYLASE 1"/>
    <property type="match status" value="1"/>
</dbReference>
<dbReference type="Pfam" id="PF01977">
    <property type="entry name" value="UbiD"/>
    <property type="match status" value="1"/>
</dbReference>
<dbReference type="Pfam" id="PF20696">
    <property type="entry name" value="UbiD_C"/>
    <property type="match status" value="1"/>
</dbReference>
<dbReference type="Pfam" id="PF20695">
    <property type="entry name" value="UbiD_N"/>
    <property type="match status" value="1"/>
</dbReference>
<dbReference type="SUPFAM" id="SSF50475">
    <property type="entry name" value="FMN-binding split barrel"/>
    <property type="match status" value="1"/>
</dbReference>
<dbReference type="SUPFAM" id="SSF143968">
    <property type="entry name" value="UbiD C-terminal domain-like"/>
    <property type="match status" value="1"/>
</dbReference>
<protein>
    <recommendedName>
        <fullName evidence="1">3-octaprenyl-4-hydroxybenzoate carboxy-lyase</fullName>
        <ecNumber evidence="1">4.1.1.98</ecNumber>
    </recommendedName>
    <alternativeName>
        <fullName evidence="1">Polyprenyl p-hydroxybenzoate decarboxylase</fullName>
    </alternativeName>
</protein>
<name>UBID_BURMA</name>
<organism>
    <name type="scientific">Burkholderia mallei (strain ATCC 23344)</name>
    <dbReference type="NCBI Taxonomy" id="243160"/>
    <lineage>
        <taxon>Bacteria</taxon>
        <taxon>Pseudomonadati</taxon>
        <taxon>Pseudomonadota</taxon>
        <taxon>Betaproteobacteria</taxon>
        <taxon>Burkholderiales</taxon>
        <taxon>Burkholderiaceae</taxon>
        <taxon>Burkholderia</taxon>
        <taxon>pseudomallei group</taxon>
    </lineage>
</organism>
<evidence type="ECO:0000255" key="1">
    <source>
        <dbReference type="HAMAP-Rule" id="MF_01636"/>
    </source>
</evidence>
<proteinExistence type="inferred from homology"/>
<keyword id="KW-1003">Cell membrane</keyword>
<keyword id="KW-0210">Decarboxylase</keyword>
<keyword id="KW-0285">Flavoprotein</keyword>
<keyword id="KW-0288">FMN</keyword>
<keyword id="KW-0456">Lyase</keyword>
<keyword id="KW-0464">Manganese</keyword>
<keyword id="KW-0472">Membrane</keyword>
<keyword id="KW-0479">Metal-binding</keyword>
<keyword id="KW-1185">Reference proteome</keyword>
<keyword id="KW-0831">Ubiquinone biosynthesis</keyword>
<reference key="1">
    <citation type="journal article" date="2004" name="Proc. Natl. Acad. Sci. U.S.A.">
        <title>Structural flexibility in the Burkholderia mallei genome.</title>
        <authorList>
            <person name="Nierman W.C."/>
            <person name="DeShazer D."/>
            <person name="Kim H.S."/>
            <person name="Tettelin H."/>
            <person name="Nelson K.E."/>
            <person name="Feldblyum T.V."/>
            <person name="Ulrich R.L."/>
            <person name="Ronning C.M."/>
            <person name="Brinkac L.M."/>
            <person name="Daugherty S.C."/>
            <person name="Davidsen T.D."/>
            <person name="DeBoy R.T."/>
            <person name="Dimitrov G."/>
            <person name="Dodson R.J."/>
            <person name="Durkin A.S."/>
            <person name="Gwinn M.L."/>
            <person name="Haft D.H."/>
            <person name="Khouri H.M."/>
            <person name="Kolonay J.F."/>
            <person name="Madupu R."/>
            <person name="Mohammoud Y."/>
            <person name="Nelson W.C."/>
            <person name="Radune D."/>
            <person name="Romero C.M."/>
            <person name="Sarria S."/>
            <person name="Selengut J."/>
            <person name="Shamblin C."/>
            <person name="Sullivan S.A."/>
            <person name="White O."/>
            <person name="Yu Y."/>
            <person name="Zafar N."/>
            <person name="Zhou L."/>
            <person name="Fraser C.M."/>
        </authorList>
    </citation>
    <scope>NUCLEOTIDE SEQUENCE [LARGE SCALE GENOMIC DNA]</scope>
    <source>
        <strain>ATCC 23344</strain>
    </source>
</reference>